<feature type="initiator methionine" description="Removed" evidence="1">
    <location>
        <position position="1"/>
    </location>
</feature>
<feature type="chain" id="PRO_0000403782" description="UbiA prenyltransferase domain-containing protein 1">
    <location>
        <begin position="2"/>
        <end position="337"/>
    </location>
</feature>
<feature type="transmembrane region" description="Helical" evidence="2">
    <location>
        <begin position="82"/>
        <end position="102"/>
    </location>
</feature>
<feature type="transmembrane region" description="Helical" evidence="2">
    <location>
        <begin position="133"/>
        <end position="153"/>
    </location>
</feature>
<feature type="transmembrane region" description="Helical" evidence="2">
    <location>
        <begin position="159"/>
        <end position="179"/>
    </location>
</feature>
<feature type="transmembrane region" description="Helical" evidence="2">
    <location>
        <begin position="187"/>
        <end position="207"/>
    </location>
</feature>
<feature type="transmembrane region" description="Helical" evidence="2">
    <location>
        <begin position="208"/>
        <end position="228"/>
    </location>
</feature>
<feature type="transmembrane region" description="Helical" evidence="2">
    <location>
        <begin position="244"/>
        <end position="266"/>
    </location>
</feature>
<feature type="transmembrane region" description="Helical" evidence="2">
    <location>
        <begin position="276"/>
        <end position="296"/>
    </location>
</feature>
<feature type="transmembrane region" description="Helical" evidence="2">
    <location>
        <begin position="314"/>
        <end position="334"/>
    </location>
</feature>
<feature type="modified residue" description="N-acetylalanine" evidence="1">
    <location>
        <position position="2"/>
    </location>
</feature>
<protein>
    <recommendedName>
        <fullName>UbiA prenyltransferase domain-containing protein 1</fullName>
        <ecNumber evidence="1">2.5.1.-</ecNumber>
        <ecNumber evidence="1">2.5.1.39</ecNumber>
    </recommendedName>
</protein>
<comment type="function">
    <text evidence="1">Prenyltransferase that mediates the formation of menaquinone-4 (MK-4) and coenzyme Q10. MK-4 is a vitamin K2 isoform required for endothelial cell development. Mediates the conversion of phylloquinone (PK) into MK-4, probably by cleaving the side chain of phylloquinone (PK) to release 2-methyl-1,4-naphthoquinone (menadione; K3) and then prenylating it with geranylgeranyl pyrophosphate (GGPP) to form MK-4. Also plays a role in cardiovascular development independently of MK-4 biosynthesis, by acting as a coenzyme Q10 biosynthetic enzyme: coenzyme Q10, also named ubiquinone, plays an important antioxidant role in the cardiovascular system. Mediates biosynthesis of coenzyme Q10 in the Golgi membrane, leading to protect cardiovascular tissues from NOS3/eNOS-dependent oxidative stress.</text>
</comment>
<comment type="catalytic activity">
    <reaction evidence="1">
        <text>menadiol + (2E,6E,10E)-geranylgeranyl diphosphate = menaquinol-4 + diphosphate</text>
        <dbReference type="Rhea" id="RHEA:74083"/>
        <dbReference type="ChEBI" id="CHEBI:6746"/>
        <dbReference type="ChEBI" id="CHEBI:33019"/>
        <dbReference type="ChEBI" id="CHEBI:58756"/>
        <dbReference type="ChEBI" id="CHEBI:193091"/>
    </reaction>
    <physiologicalReaction direction="left-to-right" evidence="1">
        <dbReference type="Rhea" id="RHEA:74084"/>
    </physiologicalReaction>
</comment>
<comment type="catalytic activity">
    <reaction evidence="1">
        <text>all-trans-decaprenyl diphosphate + 4-hydroxybenzoate = 4-hydroxy-3-(all-trans-decaprenyl)benzoate + diphosphate</text>
        <dbReference type="Rhea" id="RHEA:44564"/>
        <dbReference type="ChEBI" id="CHEBI:17879"/>
        <dbReference type="ChEBI" id="CHEBI:33019"/>
        <dbReference type="ChEBI" id="CHEBI:60721"/>
        <dbReference type="ChEBI" id="CHEBI:84503"/>
        <dbReference type="EC" id="2.5.1.39"/>
    </reaction>
    <physiologicalReaction direction="left-to-right" evidence="1">
        <dbReference type="Rhea" id="RHEA:44565"/>
    </physiologicalReaction>
</comment>
<comment type="pathway">
    <text evidence="1">Quinol/quinone metabolism; menaquinone biosynthesis.</text>
</comment>
<comment type="pathway">
    <text evidence="1">Cofactor biosynthesis; ubiquinone biosynthesis.</text>
</comment>
<comment type="subunit">
    <text evidence="1">Interacts with HMGCR and SOAT1.</text>
</comment>
<comment type="subcellular location">
    <subcellularLocation>
        <location evidence="1">Endoplasmic reticulum membrane</location>
        <topology evidence="2">Multi-pass membrane protein</topology>
    </subcellularLocation>
    <subcellularLocation>
        <location evidence="1">Golgi apparatus membrane</location>
        <topology evidence="2">Multi-pass membrane protein</topology>
    </subcellularLocation>
    <subcellularLocation>
        <location evidence="1">Mitochondrion membrane</location>
        <topology evidence="2">Multi-pass membrane protein</topology>
    </subcellularLocation>
</comment>
<comment type="similarity">
    <text evidence="3">Belongs to the UbiA prenyltransferase family.</text>
</comment>
<accession>D2HKB0</accession>
<evidence type="ECO:0000250" key="1">
    <source>
        <dbReference type="UniProtKB" id="Q9Y5Z9"/>
    </source>
</evidence>
<evidence type="ECO:0000255" key="2"/>
<evidence type="ECO:0000305" key="3"/>
<dbReference type="EC" id="2.5.1.-" evidence="1"/>
<dbReference type="EC" id="2.5.1.39" evidence="1"/>
<dbReference type="EMBL" id="GL192942">
    <property type="protein sequence ID" value="EFB24843.1"/>
    <property type="molecule type" value="Genomic_DNA"/>
</dbReference>
<dbReference type="RefSeq" id="XP_002922794.1">
    <property type="nucleotide sequence ID" value="XM_002922748.4"/>
</dbReference>
<dbReference type="SMR" id="D2HKB0"/>
<dbReference type="STRING" id="9646.ENSAMEP00000010146"/>
<dbReference type="Ensembl" id="ENSAMET00000046470.1">
    <property type="protein sequence ID" value="ENSAMEP00000023886.1"/>
    <property type="gene ID" value="ENSAMEG00000023578.1"/>
</dbReference>
<dbReference type="GeneID" id="100467850"/>
<dbReference type="KEGG" id="aml:100467850"/>
<dbReference type="CTD" id="29914"/>
<dbReference type="eggNOG" id="KOG4581">
    <property type="taxonomic scope" value="Eukaryota"/>
</dbReference>
<dbReference type="GeneTree" id="ENSGT00390000012439"/>
<dbReference type="HOGENOM" id="CLU_043611_0_0_1"/>
<dbReference type="InParanoid" id="D2HKB0"/>
<dbReference type="OMA" id="QWIEGAR"/>
<dbReference type="OrthoDB" id="203513at2759"/>
<dbReference type="TreeFam" id="TF323238"/>
<dbReference type="UniPathway" id="UPA00079"/>
<dbReference type="UniPathway" id="UPA00232"/>
<dbReference type="Proteomes" id="UP000008912">
    <property type="component" value="Unassembled WGS sequence"/>
</dbReference>
<dbReference type="GO" id="GO:0005783">
    <property type="term" value="C:endoplasmic reticulum"/>
    <property type="evidence" value="ECO:0000250"/>
    <property type="project" value="UniProtKB"/>
</dbReference>
<dbReference type="GO" id="GO:0005789">
    <property type="term" value="C:endoplasmic reticulum membrane"/>
    <property type="evidence" value="ECO:0007669"/>
    <property type="project" value="UniProtKB-SubCell"/>
</dbReference>
<dbReference type="GO" id="GO:0000139">
    <property type="term" value="C:Golgi membrane"/>
    <property type="evidence" value="ECO:0000250"/>
    <property type="project" value="UniProtKB"/>
</dbReference>
<dbReference type="GO" id="GO:0031966">
    <property type="term" value="C:mitochondrial membrane"/>
    <property type="evidence" value="ECO:0007669"/>
    <property type="project" value="UniProtKB-SubCell"/>
</dbReference>
<dbReference type="GO" id="GO:0005634">
    <property type="term" value="C:nucleus"/>
    <property type="evidence" value="ECO:0007669"/>
    <property type="project" value="Ensembl"/>
</dbReference>
<dbReference type="GO" id="GO:0016209">
    <property type="term" value="F:antioxidant activity"/>
    <property type="evidence" value="ECO:0000250"/>
    <property type="project" value="UniProtKB"/>
</dbReference>
<dbReference type="GO" id="GO:0004659">
    <property type="term" value="F:prenyltransferase activity"/>
    <property type="evidence" value="ECO:0000250"/>
    <property type="project" value="UniProtKB"/>
</dbReference>
<dbReference type="GO" id="GO:0072359">
    <property type="term" value="P:circulatory system development"/>
    <property type="evidence" value="ECO:0000250"/>
    <property type="project" value="UniProtKB"/>
</dbReference>
<dbReference type="GO" id="GO:0001885">
    <property type="term" value="P:endothelial cell development"/>
    <property type="evidence" value="ECO:0000250"/>
    <property type="project" value="UniProtKB"/>
</dbReference>
<dbReference type="GO" id="GO:0009234">
    <property type="term" value="P:menaquinone biosynthetic process"/>
    <property type="evidence" value="ECO:0000250"/>
    <property type="project" value="UniProtKB"/>
</dbReference>
<dbReference type="GO" id="GO:0042374">
    <property type="term" value="P:phylloquinone metabolic process"/>
    <property type="evidence" value="ECO:0007669"/>
    <property type="project" value="Ensembl"/>
</dbReference>
<dbReference type="GO" id="GO:0006744">
    <property type="term" value="P:ubiquinone biosynthetic process"/>
    <property type="evidence" value="ECO:0000250"/>
    <property type="project" value="UniProtKB"/>
</dbReference>
<dbReference type="GO" id="GO:0042371">
    <property type="term" value="P:vitamin K biosynthetic process"/>
    <property type="evidence" value="ECO:0000250"/>
    <property type="project" value="UniProtKB"/>
</dbReference>
<dbReference type="CDD" id="cd13962">
    <property type="entry name" value="PT_UbiA_UBIAD1"/>
    <property type="match status" value="1"/>
</dbReference>
<dbReference type="FunFam" id="1.10.357.140:FF:000005">
    <property type="entry name" value="UbiA prenyltransferase domain-containing protein 1"/>
    <property type="match status" value="1"/>
</dbReference>
<dbReference type="Gene3D" id="1.10.357.140">
    <property type="entry name" value="UbiA prenyltransferase"/>
    <property type="match status" value="1"/>
</dbReference>
<dbReference type="InterPro" id="IPR000537">
    <property type="entry name" value="UbiA_prenyltransferase"/>
</dbReference>
<dbReference type="InterPro" id="IPR044878">
    <property type="entry name" value="UbiA_sf"/>
</dbReference>
<dbReference type="InterPro" id="IPR026046">
    <property type="entry name" value="UBIAD1"/>
</dbReference>
<dbReference type="PANTHER" id="PTHR13929">
    <property type="entry name" value="1,4-DIHYDROXY-2-NAPHTHOATE OCTAPRENYLTRANSFERASE"/>
    <property type="match status" value="1"/>
</dbReference>
<dbReference type="PANTHER" id="PTHR13929:SF0">
    <property type="entry name" value="UBIA PRENYLTRANSFERASE DOMAIN-CONTAINING PROTEIN 1"/>
    <property type="match status" value="1"/>
</dbReference>
<dbReference type="Pfam" id="PF01040">
    <property type="entry name" value="UbiA"/>
    <property type="match status" value="1"/>
</dbReference>
<dbReference type="PIRSF" id="PIRSF005355">
    <property type="entry name" value="UBIAD1"/>
    <property type="match status" value="1"/>
</dbReference>
<name>UBIA1_AILME</name>
<gene>
    <name type="primary">UBIAD1</name>
    <name type="ORF">PANDA_011808</name>
</gene>
<keyword id="KW-0007">Acetylation</keyword>
<keyword id="KW-0256">Endoplasmic reticulum</keyword>
<keyword id="KW-0333">Golgi apparatus</keyword>
<keyword id="KW-0472">Membrane</keyword>
<keyword id="KW-0474">Menaquinone biosynthesis</keyword>
<keyword id="KW-0496">Mitochondrion</keyword>
<keyword id="KW-0637">Prenyltransferase</keyword>
<keyword id="KW-1185">Reference proteome</keyword>
<keyword id="KW-0808">Transferase</keyword>
<keyword id="KW-0812">Transmembrane</keyword>
<keyword id="KW-1133">Transmembrane helix</keyword>
<keyword id="KW-0831">Ubiquinone biosynthesis</keyword>
<reference key="1">
    <citation type="journal article" date="2010" name="Nature">
        <title>The sequence and de novo assembly of the giant panda genome.</title>
        <authorList>
            <person name="Li R."/>
            <person name="Fan W."/>
            <person name="Tian G."/>
            <person name="Zhu H."/>
            <person name="He L."/>
            <person name="Cai J."/>
            <person name="Huang Q."/>
            <person name="Cai Q."/>
            <person name="Li B."/>
            <person name="Bai Y."/>
            <person name="Zhang Z."/>
            <person name="Zhang Y."/>
            <person name="Wang W."/>
            <person name="Li J."/>
            <person name="Wei F."/>
            <person name="Li H."/>
            <person name="Jian M."/>
            <person name="Li J."/>
            <person name="Zhang Z."/>
            <person name="Nielsen R."/>
            <person name="Li D."/>
            <person name="Gu W."/>
            <person name="Yang Z."/>
            <person name="Xuan Z."/>
            <person name="Ryder O.A."/>
            <person name="Leung F.C."/>
            <person name="Zhou Y."/>
            <person name="Cao J."/>
            <person name="Sun X."/>
            <person name="Fu Y."/>
            <person name="Fang X."/>
            <person name="Guo X."/>
            <person name="Wang B."/>
            <person name="Hou R."/>
            <person name="Shen F."/>
            <person name="Mu B."/>
            <person name="Ni P."/>
            <person name="Lin R."/>
            <person name="Qian W."/>
            <person name="Wang G."/>
            <person name="Yu C."/>
            <person name="Nie W."/>
            <person name="Wang J."/>
            <person name="Wu Z."/>
            <person name="Liang H."/>
            <person name="Min J."/>
            <person name="Wu Q."/>
            <person name="Cheng S."/>
            <person name="Ruan J."/>
            <person name="Wang M."/>
            <person name="Shi Z."/>
            <person name="Wen M."/>
            <person name="Liu B."/>
            <person name="Ren X."/>
            <person name="Zheng H."/>
            <person name="Dong D."/>
            <person name="Cook K."/>
            <person name="Shan G."/>
            <person name="Zhang H."/>
            <person name="Kosiol C."/>
            <person name="Xie X."/>
            <person name="Lu Z."/>
            <person name="Zheng H."/>
            <person name="Li Y."/>
            <person name="Steiner C.C."/>
            <person name="Lam T.T."/>
            <person name="Lin S."/>
            <person name="Zhang Q."/>
            <person name="Li G."/>
            <person name="Tian J."/>
            <person name="Gong T."/>
            <person name="Liu H."/>
            <person name="Zhang D."/>
            <person name="Fang L."/>
            <person name="Ye C."/>
            <person name="Zhang J."/>
            <person name="Hu W."/>
            <person name="Xu A."/>
            <person name="Ren Y."/>
            <person name="Zhang G."/>
            <person name="Bruford M.W."/>
            <person name="Li Q."/>
            <person name="Ma L."/>
            <person name="Guo Y."/>
            <person name="An N."/>
            <person name="Hu Y."/>
            <person name="Zheng Y."/>
            <person name="Shi Y."/>
            <person name="Li Z."/>
            <person name="Liu Q."/>
            <person name="Chen Y."/>
            <person name="Zhao J."/>
            <person name="Qu N."/>
            <person name="Zhao S."/>
            <person name="Tian F."/>
            <person name="Wang X."/>
            <person name="Wang H."/>
            <person name="Xu L."/>
            <person name="Liu X."/>
            <person name="Vinar T."/>
            <person name="Wang Y."/>
            <person name="Lam T.W."/>
            <person name="Yiu S.M."/>
            <person name="Liu S."/>
            <person name="Zhang H."/>
            <person name="Li D."/>
            <person name="Huang Y."/>
            <person name="Wang X."/>
            <person name="Yang G."/>
            <person name="Jiang Z."/>
            <person name="Wang J."/>
            <person name="Qin N."/>
            <person name="Li L."/>
            <person name="Li J."/>
            <person name="Bolund L."/>
            <person name="Kristiansen K."/>
            <person name="Wong G.K."/>
            <person name="Olson M."/>
            <person name="Zhang X."/>
            <person name="Li S."/>
            <person name="Yang H."/>
            <person name="Wang J."/>
            <person name="Wang J."/>
        </authorList>
    </citation>
    <scope>NUCLEOTIDE SEQUENCE [LARGE SCALE GENOMIC DNA]</scope>
</reference>
<sequence length="337" mass="36535">MAASQVPGEINIQAGETAKSGDRDLLGNDCRDQDRLPQRSWRQKCASYVLALRPWSFSASLTPVALGSALAYRSQGVLDPRLLVGCAVAVLAVHGAGNLVNTYYDFSKGIDHKKSDDRTLVDRILEPQDVVLFGVFLYTLGCVCAACLYCLSPLKLEHLALIYFGGLSGSFLYTGGIGFKYVALGDLVILITFGPLAVMFAYAVQVGSLAVFPLVYAIPLALSTEAVLHSNNTRDMESDREAGIVTLAILIGPTLSYVLYNTLLFLPYLIFSILATHCSISLALPLLTVPMAFSLERQFRSQTFNKLPQRTAKLNLLLGLFYVFGIILAPAGSLPKL</sequence>
<organism>
    <name type="scientific">Ailuropoda melanoleuca</name>
    <name type="common">Giant panda</name>
    <dbReference type="NCBI Taxonomy" id="9646"/>
    <lineage>
        <taxon>Eukaryota</taxon>
        <taxon>Metazoa</taxon>
        <taxon>Chordata</taxon>
        <taxon>Craniata</taxon>
        <taxon>Vertebrata</taxon>
        <taxon>Euteleostomi</taxon>
        <taxon>Mammalia</taxon>
        <taxon>Eutheria</taxon>
        <taxon>Laurasiatheria</taxon>
        <taxon>Carnivora</taxon>
        <taxon>Caniformia</taxon>
        <taxon>Ursidae</taxon>
        <taxon>Ailuropoda</taxon>
    </lineage>
</organism>
<proteinExistence type="inferred from homology"/>